<evidence type="ECO:0000250" key="1"/>
<evidence type="ECO:0000255" key="2"/>
<evidence type="ECO:0000255" key="3">
    <source>
        <dbReference type="PROSITE-ProRule" id="PRU01330"/>
    </source>
</evidence>
<evidence type="ECO:0000255" key="4">
    <source>
        <dbReference type="PROSITE-ProRule" id="PRU01331"/>
    </source>
</evidence>
<evidence type="ECO:0000256" key="5">
    <source>
        <dbReference type="SAM" id="MobiDB-lite"/>
    </source>
</evidence>
<evidence type="ECO:0000269" key="6">
    <source>
    </source>
</evidence>
<evidence type="ECO:0000269" key="7">
    <source>
    </source>
</evidence>
<evidence type="ECO:0000305" key="8"/>
<evidence type="ECO:0000305" key="9">
    <source>
    </source>
</evidence>
<evidence type="ECO:0007744" key="10">
    <source>
    </source>
</evidence>
<keyword id="KW-0067">ATP-binding</keyword>
<keyword id="KW-0150">Chloroplast</keyword>
<keyword id="KW-0436">Ligase</keyword>
<keyword id="KW-0496">Mitochondrion</keyword>
<keyword id="KW-0547">Nucleotide-binding</keyword>
<keyword id="KW-0597">Phosphoprotein</keyword>
<keyword id="KW-0934">Plastid</keyword>
<keyword id="KW-1185">Reference proteome</keyword>
<keyword id="KW-0809">Transit peptide</keyword>
<protein>
    <recommendedName>
        <fullName>Glutamine synthetase, chloroplastic/mitochondrial</fullName>
        <ecNumber evidence="7">6.3.1.2</ecNumber>
    </recommendedName>
    <alternativeName>
        <fullName>GS2</fullName>
    </alternativeName>
    <alternativeName>
        <fullName>Glutamate--ammonia ligase</fullName>
    </alternativeName>
</protein>
<proteinExistence type="evidence at protein level"/>
<comment type="function">
    <text evidence="7">The light-modulated chloroplast/mitochondrial enzyme, encoded by a nuclear gene and expressed primarily in leaves, is responsible for the reassimilation of the ammonia generated by photorespiration.</text>
</comment>
<comment type="catalytic activity">
    <reaction evidence="7">
        <text>L-glutamate + NH4(+) + ATP = L-glutamine + ADP + phosphate + H(+)</text>
        <dbReference type="Rhea" id="RHEA:16169"/>
        <dbReference type="ChEBI" id="CHEBI:15378"/>
        <dbReference type="ChEBI" id="CHEBI:28938"/>
        <dbReference type="ChEBI" id="CHEBI:29985"/>
        <dbReference type="ChEBI" id="CHEBI:30616"/>
        <dbReference type="ChEBI" id="CHEBI:43474"/>
        <dbReference type="ChEBI" id="CHEBI:58359"/>
        <dbReference type="ChEBI" id="CHEBI:456216"/>
        <dbReference type="EC" id="6.3.1.2"/>
    </reaction>
    <physiologicalReaction direction="left-to-right" evidence="9">
        <dbReference type="Rhea" id="RHEA:16170"/>
    </physiologicalReaction>
</comment>
<comment type="subunit">
    <text evidence="1">Homooctamer.</text>
</comment>
<comment type="subcellular location">
    <subcellularLocation>
        <location evidence="7">Plastid</location>
        <location evidence="7">Chloroplast</location>
    </subcellularLocation>
    <subcellularLocation>
        <location evidence="7">Mitochondrion</location>
    </subcellularLocation>
</comment>
<comment type="tissue specificity">
    <text evidence="7">Expressed in mesophyll and epidermal cells of leaves.</text>
</comment>
<comment type="induction">
    <text evidence="6">By light, sucrose, glucose and fructose.</text>
</comment>
<comment type="similarity">
    <text evidence="8">Belongs to the glutamine synthetase family.</text>
</comment>
<reference key="1">
    <citation type="journal article" date="1991" name="Mol. Gen. Genet.">
        <title>The glutamine synthetase gene family of Arabidopsis thaliana: light-regulation and differential expression in leaves, roots and seeds.</title>
        <authorList>
            <person name="Peterman T.K."/>
            <person name="Goodman H.M."/>
        </authorList>
    </citation>
    <scope>NUCLEOTIDE SEQUENCE [MRNA]</scope>
</reference>
<reference key="2">
    <citation type="submission" date="1998-05" db="EMBL/GenBank/DDBJ databases">
        <title>Nucleotide sequences of genes for cytosolic and chloroplastic glutamine synthetase from Arabidopsis thaliana.</title>
        <authorList>
            <person name="Arimura G."/>
            <person name="Fujii M."/>
            <person name="Takahashi M."/>
            <person name="Goshima N."/>
            <person name="Morikawa H."/>
        </authorList>
    </citation>
    <scope>NUCLEOTIDE SEQUENCE [GENOMIC DNA]</scope>
</reference>
<reference key="3">
    <citation type="journal article" date="1998" name="DNA Res.">
        <title>Structural analysis of Arabidopsis thaliana chromosome 5. VI. Sequence features of the regions of 1,367,185 bp covered by 19 physically assigned P1 and TAC clones.</title>
        <authorList>
            <person name="Kotani H."/>
            <person name="Nakamura Y."/>
            <person name="Sato S."/>
            <person name="Asamizu E."/>
            <person name="Kaneko T."/>
            <person name="Miyajima N."/>
            <person name="Tabata S."/>
        </authorList>
    </citation>
    <scope>NUCLEOTIDE SEQUENCE [LARGE SCALE GENOMIC DNA]</scope>
    <source>
        <strain>cv. Columbia</strain>
    </source>
</reference>
<reference key="4">
    <citation type="journal article" date="2017" name="Plant J.">
        <title>Araport11: a complete reannotation of the Arabidopsis thaliana reference genome.</title>
        <authorList>
            <person name="Cheng C.Y."/>
            <person name="Krishnakumar V."/>
            <person name="Chan A.P."/>
            <person name="Thibaud-Nissen F."/>
            <person name="Schobel S."/>
            <person name="Town C.D."/>
        </authorList>
    </citation>
    <scope>GENOME REANNOTATION</scope>
    <source>
        <strain>cv. Columbia</strain>
    </source>
</reference>
<reference key="5">
    <citation type="journal article" date="2003" name="Science">
        <title>Empirical analysis of transcriptional activity in the Arabidopsis genome.</title>
        <authorList>
            <person name="Yamada K."/>
            <person name="Lim J."/>
            <person name="Dale J.M."/>
            <person name="Chen H."/>
            <person name="Shinn P."/>
            <person name="Palm C.J."/>
            <person name="Southwick A.M."/>
            <person name="Wu H.C."/>
            <person name="Kim C.J."/>
            <person name="Nguyen M."/>
            <person name="Pham P.K."/>
            <person name="Cheuk R.F."/>
            <person name="Karlin-Newmann G."/>
            <person name="Liu S.X."/>
            <person name="Lam B."/>
            <person name="Sakano H."/>
            <person name="Wu T."/>
            <person name="Yu G."/>
            <person name="Miranda M."/>
            <person name="Quach H.L."/>
            <person name="Tripp M."/>
            <person name="Chang C.H."/>
            <person name="Lee J.M."/>
            <person name="Toriumi M.J."/>
            <person name="Chan M.M."/>
            <person name="Tang C.C."/>
            <person name="Onodera C.S."/>
            <person name="Deng J.M."/>
            <person name="Akiyama K."/>
            <person name="Ansari Y."/>
            <person name="Arakawa T."/>
            <person name="Banh J."/>
            <person name="Banno F."/>
            <person name="Bowser L."/>
            <person name="Brooks S.Y."/>
            <person name="Carninci P."/>
            <person name="Chao Q."/>
            <person name="Choy N."/>
            <person name="Enju A."/>
            <person name="Goldsmith A.D."/>
            <person name="Gurjal M."/>
            <person name="Hansen N.F."/>
            <person name="Hayashizaki Y."/>
            <person name="Johnson-Hopson C."/>
            <person name="Hsuan V.W."/>
            <person name="Iida K."/>
            <person name="Karnes M."/>
            <person name="Khan S."/>
            <person name="Koesema E."/>
            <person name="Ishida J."/>
            <person name="Jiang P.X."/>
            <person name="Jones T."/>
            <person name="Kawai J."/>
            <person name="Kamiya A."/>
            <person name="Meyers C."/>
            <person name="Nakajima M."/>
            <person name="Narusaka M."/>
            <person name="Seki M."/>
            <person name="Sakurai T."/>
            <person name="Satou M."/>
            <person name="Tamse R."/>
            <person name="Vaysberg M."/>
            <person name="Wallender E.K."/>
            <person name="Wong C."/>
            <person name="Yamamura Y."/>
            <person name="Yuan S."/>
            <person name="Shinozaki K."/>
            <person name="Davis R.W."/>
            <person name="Theologis A."/>
            <person name="Ecker J.R."/>
        </authorList>
    </citation>
    <scope>NUCLEOTIDE SEQUENCE [LARGE SCALE MRNA]</scope>
    <source>
        <strain>cv. Columbia</strain>
    </source>
</reference>
<reference key="6">
    <citation type="submission" date="2002-03" db="EMBL/GenBank/DDBJ databases">
        <title>Full-length cDNA from Arabidopsis thaliana.</title>
        <authorList>
            <person name="Brover V.V."/>
            <person name="Troukhan M.E."/>
            <person name="Alexandrov N.A."/>
            <person name="Lu Y.-P."/>
            <person name="Flavell R.B."/>
            <person name="Feldmann K.A."/>
        </authorList>
    </citation>
    <scope>NUCLEOTIDE SEQUENCE [LARGE SCALE MRNA]</scope>
</reference>
<reference key="7">
    <citation type="journal article" date="1999" name="Plant Physiol.">
        <title>Carbon and amino acids reciprocally modulate the expression of glutamine synthetase in Arabidopsis.</title>
        <authorList>
            <person name="Oliveira I.C."/>
            <person name="Coruzzi G.M."/>
        </authorList>
    </citation>
    <scope>INDUCTION</scope>
</reference>
<reference key="8">
    <citation type="journal article" date="2004" name="Plant Cell">
        <title>Arabidopsis thaliana GLN2-encoded glutamine synthetase is dual targeted to leaf mitochondria and chloroplasts.</title>
        <authorList>
            <person name="Taira M."/>
            <person name="Valtersson U."/>
            <person name="Burkhardt B."/>
            <person name="Ludwig R.A."/>
        </authorList>
    </citation>
    <scope>FUNCTION</scope>
    <scope>CATALYTIC ACTIVITY</scope>
    <scope>SUBCELLULAR LOCATION</scope>
    <scope>TISSUE SPECIFICITY</scope>
</reference>
<reference key="9">
    <citation type="journal article" date="2009" name="Plant Physiol.">
        <title>Large-scale Arabidopsis phosphoproteome profiling reveals novel chloroplast kinase substrates and phosphorylation networks.</title>
        <authorList>
            <person name="Reiland S."/>
            <person name="Messerli G."/>
            <person name="Baerenfaller K."/>
            <person name="Gerrits B."/>
            <person name="Endler A."/>
            <person name="Grossmann J."/>
            <person name="Gruissem W."/>
            <person name="Baginsky S."/>
        </authorList>
    </citation>
    <scope>PHOSPHORYLATION [LARGE SCALE ANALYSIS] AT SER-106</scope>
    <scope>IDENTIFICATION BY MASS SPECTROMETRY [LARGE SCALE ANALYSIS]</scope>
</reference>
<organism>
    <name type="scientific">Arabidopsis thaliana</name>
    <name type="common">Mouse-ear cress</name>
    <dbReference type="NCBI Taxonomy" id="3702"/>
    <lineage>
        <taxon>Eukaryota</taxon>
        <taxon>Viridiplantae</taxon>
        <taxon>Streptophyta</taxon>
        <taxon>Embryophyta</taxon>
        <taxon>Tracheophyta</taxon>
        <taxon>Spermatophyta</taxon>
        <taxon>Magnoliopsida</taxon>
        <taxon>eudicotyledons</taxon>
        <taxon>Gunneridae</taxon>
        <taxon>Pentapetalae</taxon>
        <taxon>rosids</taxon>
        <taxon>malvids</taxon>
        <taxon>Brassicales</taxon>
        <taxon>Brassicaceae</taxon>
        <taxon>Camelineae</taxon>
        <taxon>Arabidopsis</taxon>
    </lineage>
</organism>
<dbReference type="EC" id="6.3.1.2" evidence="7"/>
<dbReference type="EMBL" id="S69727">
    <property type="protein sequence ID" value="AAB20558.1"/>
    <property type="molecule type" value="mRNA"/>
</dbReference>
<dbReference type="EMBL" id="AB015045">
    <property type="protein sequence ID" value="BAA88761.1"/>
    <property type="molecule type" value="Genomic_DNA"/>
</dbReference>
<dbReference type="EMBL" id="AB013393">
    <property type="protein sequence ID" value="BAB09304.1"/>
    <property type="molecule type" value="Genomic_DNA"/>
</dbReference>
<dbReference type="EMBL" id="CP002688">
    <property type="protein sequence ID" value="AED93993.1"/>
    <property type="molecule type" value="Genomic_DNA"/>
</dbReference>
<dbReference type="EMBL" id="CP002688">
    <property type="protein sequence ID" value="AED93994.1"/>
    <property type="molecule type" value="Genomic_DNA"/>
</dbReference>
<dbReference type="EMBL" id="CP002688">
    <property type="protein sequence ID" value="AED93995.1"/>
    <property type="molecule type" value="Genomic_DNA"/>
</dbReference>
<dbReference type="EMBL" id="AF428319">
    <property type="protein sequence ID" value="AAL16249.1"/>
    <property type="molecule type" value="mRNA"/>
</dbReference>
<dbReference type="EMBL" id="AF428461">
    <property type="protein sequence ID" value="AAL16230.1"/>
    <property type="molecule type" value="mRNA"/>
</dbReference>
<dbReference type="EMBL" id="AY081252">
    <property type="protein sequence ID" value="AAL91141.1"/>
    <property type="molecule type" value="mRNA"/>
</dbReference>
<dbReference type="EMBL" id="AY091114">
    <property type="protein sequence ID" value="AAM14064.1"/>
    <property type="molecule type" value="mRNA"/>
</dbReference>
<dbReference type="EMBL" id="AY122977">
    <property type="protein sequence ID" value="AAM67510.1"/>
    <property type="molecule type" value="mRNA"/>
</dbReference>
<dbReference type="EMBL" id="AY088222">
    <property type="protein sequence ID" value="AAM65763.1"/>
    <property type="molecule type" value="mRNA"/>
</dbReference>
<dbReference type="PIR" id="S18600">
    <property type="entry name" value="S18600"/>
</dbReference>
<dbReference type="RefSeq" id="NP_001031969.1">
    <property type="nucleotide sequence ID" value="NM_001036892.1"/>
</dbReference>
<dbReference type="RefSeq" id="NP_001078639.1">
    <property type="nucleotide sequence ID" value="NM_001085170.1"/>
</dbReference>
<dbReference type="RefSeq" id="NP_198413.1">
    <property type="nucleotide sequence ID" value="NM_122954.4"/>
</dbReference>
<dbReference type="SMR" id="Q43127"/>
<dbReference type="BioGRID" id="18788">
    <property type="interactions" value="9"/>
</dbReference>
<dbReference type="DIP" id="DIP-32735N"/>
<dbReference type="FunCoup" id="Q43127">
    <property type="interactions" value="2892"/>
</dbReference>
<dbReference type="IntAct" id="Q43127">
    <property type="interactions" value="3"/>
</dbReference>
<dbReference type="MINT" id="Q43127"/>
<dbReference type="STRING" id="3702.Q43127"/>
<dbReference type="iPTMnet" id="Q43127"/>
<dbReference type="MetOSite" id="Q43127"/>
<dbReference type="PaxDb" id="3702-AT5G35630.1"/>
<dbReference type="ProteomicsDB" id="248575"/>
<dbReference type="EnsemblPlants" id="AT5G35630.1">
    <property type="protein sequence ID" value="AT5G35630.1"/>
    <property type="gene ID" value="AT5G35630"/>
</dbReference>
<dbReference type="EnsemblPlants" id="AT5G35630.2">
    <property type="protein sequence ID" value="AT5G35630.2"/>
    <property type="gene ID" value="AT5G35630"/>
</dbReference>
<dbReference type="EnsemblPlants" id="AT5G35630.3">
    <property type="protein sequence ID" value="AT5G35630.3"/>
    <property type="gene ID" value="AT5G35630"/>
</dbReference>
<dbReference type="GeneID" id="833535"/>
<dbReference type="Gramene" id="AT5G35630.1">
    <property type="protein sequence ID" value="AT5G35630.1"/>
    <property type="gene ID" value="AT5G35630"/>
</dbReference>
<dbReference type="Gramene" id="AT5G35630.2">
    <property type="protein sequence ID" value="AT5G35630.2"/>
    <property type="gene ID" value="AT5G35630"/>
</dbReference>
<dbReference type="Gramene" id="AT5G35630.3">
    <property type="protein sequence ID" value="AT5G35630.3"/>
    <property type="gene ID" value="AT5G35630"/>
</dbReference>
<dbReference type="KEGG" id="ath:AT5G35630"/>
<dbReference type="Araport" id="AT5G35630"/>
<dbReference type="TAIR" id="AT5G35630">
    <property type="gene designation" value="GS2"/>
</dbReference>
<dbReference type="eggNOG" id="KOG0683">
    <property type="taxonomic scope" value="Eukaryota"/>
</dbReference>
<dbReference type="HOGENOM" id="CLU_036762_1_1_1"/>
<dbReference type="InParanoid" id="Q43127"/>
<dbReference type="OMA" id="CQMKLTK"/>
<dbReference type="OrthoDB" id="1033857at2759"/>
<dbReference type="PhylomeDB" id="Q43127"/>
<dbReference type="BioCyc" id="ARA:AT5G35630-MONOMER"/>
<dbReference type="BioCyc" id="MetaCyc:AT5G35630-MONOMER"/>
<dbReference type="BRENDA" id="6.3.1.2">
    <property type="organism ID" value="399"/>
</dbReference>
<dbReference type="CD-CODE" id="4299E36E">
    <property type="entry name" value="Nucleolus"/>
</dbReference>
<dbReference type="PRO" id="PR:Q43127"/>
<dbReference type="Proteomes" id="UP000006548">
    <property type="component" value="Chromosome 5"/>
</dbReference>
<dbReference type="ExpressionAtlas" id="Q43127">
    <property type="expression patterns" value="baseline and differential"/>
</dbReference>
<dbReference type="GO" id="GO:0048046">
    <property type="term" value="C:apoplast"/>
    <property type="evidence" value="ECO:0007005"/>
    <property type="project" value="TAIR"/>
</dbReference>
<dbReference type="GO" id="GO:0009507">
    <property type="term" value="C:chloroplast"/>
    <property type="evidence" value="ECO:0000314"/>
    <property type="project" value="TAIR"/>
</dbReference>
<dbReference type="GO" id="GO:0009941">
    <property type="term" value="C:chloroplast envelope"/>
    <property type="evidence" value="ECO:0007005"/>
    <property type="project" value="TAIR"/>
</dbReference>
<dbReference type="GO" id="GO:0009570">
    <property type="term" value="C:chloroplast stroma"/>
    <property type="evidence" value="ECO:0007005"/>
    <property type="project" value="TAIR"/>
</dbReference>
<dbReference type="GO" id="GO:0009535">
    <property type="term" value="C:chloroplast thylakoid membrane"/>
    <property type="evidence" value="ECO:0007005"/>
    <property type="project" value="TAIR"/>
</dbReference>
<dbReference type="GO" id="GO:0022626">
    <property type="term" value="C:cytosolic ribosome"/>
    <property type="evidence" value="ECO:0007005"/>
    <property type="project" value="TAIR"/>
</dbReference>
<dbReference type="GO" id="GO:0005739">
    <property type="term" value="C:mitochondrion"/>
    <property type="evidence" value="ECO:0000314"/>
    <property type="project" value="TAIR"/>
</dbReference>
<dbReference type="GO" id="GO:0009536">
    <property type="term" value="C:plastid"/>
    <property type="evidence" value="ECO:0007005"/>
    <property type="project" value="TAIR"/>
</dbReference>
<dbReference type="GO" id="GO:0009579">
    <property type="term" value="C:thylakoid"/>
    <property type="evidence" value="ECO:0007005"/>
    <property type="project" value="TAIR"/>
</dbReference>
<dbReference type="GO" id="GO:0005524">
    <property type="term" value="F:ATP binding"/>
    <property type="evidence" value="ECO:0007669"/>
    <property type="project" value="UniProtKB-KW"/>
</dbReference>
<dbReference type="GO" id="GO:0004356">
    <property type="term" value="F:glutamine synthetase activity"/>
    <property type="evidence" value="ECO:0000314"/>
    <property type="project" value="TAIR"/>
</dbReference>
<dbReference type="GO" id="GO:0003729">
    <property type="term" value="F:mRNA binding"/>
    <property type="evidence" value="ECO:0000314"/>
    <property type="project" value="TAIR"/>
</dbReference>
<dbReference type="GO" id="GO:1901149">
    <property type="term" value="F:salicylic acid binding"/>
    <property type="evidence" value="ECO:0007005"/>
    <property type="project" value="TAIR"/>
</dbReference>
<dbReference type="GO" id="GO:0019676">
    <property type="term" value="P:ammonia assimilation cycle"/>
    <property type="evidence" value="ECO:0000304"/>
    <property type="project" value="TAIR"/>
</dbReference>
<dbReference type="GO" id="GO:0006542">
    <property type="term" value="P:glutamine biosynthetic process"/>
    <property type="evidence" value="ECO:0007669"/>
    <property type="project" value="InterPro"/>
</dbReference>
<dbReference type="GO" id="GO:0046686">
    <property type="term" value="P:response to cadmium ion"/>
    <property type="evidence" value="ECO:0000270"/>
    <property type="project" value="TAIR"/>
</dbReference>
<dbReference type="FunFam" id="3.30.590.10:FF:000004">
    <property type="entry name" value="Glutamine synthetase"/>
    <property type="match status" value="1"/>
</dbReference>
<dbReference type="FunFam" id="3.10.20.70:FF:000003">
    <property type="entry name" value="Glutamine synthetase, chloroplastic"/>
    <property type="match status" value="1"/>
</dbReference>
<dbReference type="Gene3D" id="3.10.20.70">
    <property type="entry name" value="Glutamine synthetase, N-terminal domain"/>
    <property type="match status" value="1"/>
</dbReference>
<dbReference type="Gene3D" id="3.30.590.10">
    <property type="entry name" value="Glutamine synthetase/guanido kinase, catalytic domain"/>
    <property type="match status" value="1"/>
</dbReference>
<dbReference type="InterPro" id="IPR008147">
    <property type="entry name" value="Gln_synt_N"/>
</dbReference>
<dbReference type="InterPro" id="IPR036651">
    <property type="entry name" value="Gln_synt_N_sf"/>
</dbReference>
<dbReference type="InterPro" id="IPR014746">
    <property type="entry name" value="Gln_synth/guanido_kin_cat_dom"/>
</dbReference>
<dbReference type="InterPro" id="IPR008146">
    <property type="entry name" value="Gln_synth_cat_dom"/>
</dbReference>
<dbReference type="InterPro" id="IPR027303">
    <property type="entry name" value="Gln_synth_gly_rich_site"/>
</dbReference>
<dbReference type="InterPro" id="IPR027302">
    <property type="entry name" value="Gln_synth_N_conserv_site"/>
</dbReference>
<dbReference type="InterPro" id="IPR050292">
    <property type="entry name" value="Glutamine_Synthetase"/>
</dbReference>
<dbReference type="PANTHER" id="PTHR20852">
    <property type="entry name" value="GLUTAMINE SYNTHETASE"/>
    <property type="match status" value="1"/>
</dbReference>
<dbReference type="PANTHER" id="PTHR20852:SF118">
    <property type="entry name" value="GLUTAMINE SYNTHETASE, CHLOROPLASTIC_MITOCHONDRIAL"/>
    <property type="match status" value="1"/>
</dbReference>
<dbReference type="Pfam" id="PF00120">
    <property type="entry name" value="Gln-synt_C"/>
    <property type="match status" value="1"/>
</dbReference>
<dbReference type="SMART" id="SM01230">
    <property type="entry name" value="Gln-synt_C"/>
    <property type="match status" value="1"/>
</dbReference>
<dbReference type="SUPFAM" id="SSF54368">
    <property type="entry name" value="Glutamine synthetase, N-terminal domain"/>
    <property type="match status" value="1"/>
</dbReference>
<dbReference type="SUPFAM" id="SSF55931">
    <property type="entry name" value="Glutamine synthetase/guanido kinase"/>
    <property type="match status" value="1"/>
</dbReference>
<dbReference type="PROSITE" id="PS00180">
    <property type="entry name" value="GLNA_1"/>
    <property type="match status" value="1"/>
</dbReference>
<dbReference type="PROSITE" id="PS00181">
    <property type="entry name" value="GLNA_ATP"/>
    <property type="match status" value="1"/>
</dbReference>
<dbReference type="PROSITE" id="PS51986">
    <property type="entry name" value="GS_BETA_GRASP"/>
    <property type="match status" value="1"/>
</dbReference>
<dbReference type="PROSITE" id="PS51987">
    <property type="entry name" value="GS_CATALYTIC"/>
    <property type="match status" value="1"/>
</dbReference>
<feature type="transit peptide" description="Chloroplast and mitochondrion" evidence="2">
    <location>
        <begin position="1"/>
        <end position="45"/>
    </location>
</feature>
<feature type="chain" id="PRO_0000011174" description="Glutamine synthetase, chloroplastic/mitochondrial">
    <location>
        <begin position="46"/>
        <end position="430"/>
    </location>
</feature>
<feature type="domain" description="GS beta-grasp" evidence="3">
    <location>
        <begin position="77"/>
        <end position="157"/>
    </location>
</feature>
<feature type="domain" description="GS catalytic" evidence="4">
    <location>
        <begin position="161"/>
        <end position="430"/>
    </location>
</feature>
<feature type="region of interest" description="Disordered" evidence="5">
    <location>
        <begin position="97"/>
        <end position="122"/>
    </location>
</feature>
<feature type="modified residue" description="Phosphoserine" evidence="10">
    <location>
        <position position="106"/>
    </location>
</feature>
<name>GLNA2_ARATH</name>
<accession>Q43127</accession>
<gene>
    <name type="primary">GLN2</name>
    <name type="synonym">GSLI</name>
    <name type="ordered locus">At5g35630</name>
    <name type="ORF">MJE4.9</name>
</gene>
<sequence>MAQILAASPTCQMRVPKHSSVIASSSKLWSSVVLKQKKQSNNKVRGFRVLALQSDNSTVNRVETLLNLDTKPYSDRIIAEYIWIGGSGIDLRSKSRTIEKPVEDPSELPKWNYDGSSTGQAPGEDSEVILYPQAIFRDPFRGGNNILVICDTWTPAGEPIPTNKRAKAAEIFSNKKVSGEVPWFGIEQEYTLLQQNVKWPLGWPVGAFPGPQGPYYCGVGADKIWGRDISDAHYKACLYAGINISGTNGEVMPGQWEFQVGPSVGIDAGDHVWCARYLLERITEQAGVVLTLDPKPIEGDWNGAGCHTNYSTKSMREEGGFEVIKKAILNLSLRHKEHISAYGEGNERRLTGKHETASIDQFSWGVANRGCSIRVGRDTEAKGKGYLEDRRPASNMDPYIVTSLLAETTLLWEPTLEAEALAAQKLSLNV</sequence>